<comment type="similarity">
    <text evidence="1">Belongs to the bacterial ribosomal protein bL34 family.</text>
</comment>
<accession>P66243</accession>
<accession>G0KE27</accession>
<accession>Q8YDA1</accession>
<evidence type="ECO:0000255" key="1">
    <source>
        <dbReference type="HAMAP-Rule" id="MF_00391"/>
    </source>
</evidence>
<evidence type="ECO:0000305" key="2"/>
<feature type="chain" id="PRO_0000187354" description="Large ribosomal subunit protein bL34">
    <location>
        <begin position="1"/>
        <end position="44"/>
    </location>
</feature>
<protein>
    <recommendedName>
        <fullName evidence="1">Large ribosomal subunit protein bL34</fullName>
    </recommendedName>
    <alternativeName>
        <fullName evidence="2">50S ribosomal protein L34</fullName>
    </alternativeName>
</protein>
<organism>
    <name type="scientific">Brucella suis biovar 1 (strain 1330)</name>
    <dbReference type="NCBI Taxonomy" id="204722"/>
    <lineage>
        <taxon>Bacteria</taxon>
        <taxon>Pseudomonadati</taxon>
        <taxon>Pseudomonadota</taxon>
        <taxon>Alphaproteobacteria</taxon>
        <taxon>Hyphomicrobiales</taxon>
        <taxon>Brucellaceae</taxon>
        <taxon>Brucella/Ochrobactrum group</taxon>
        <taxon>Brucella</taxon>
    </lineage>
</organism>
<sequence>MKRTYQPSKIVRKRRHGFRARMATTGGRKVLAARRTRGRKRLSA</sequence>
<name>RL34_BRUSU</name>
<gene>
    <name evidence="1" type="primary">rpmH</name>
    <name type="ordered locus">BRA1021</name>
    <name type="ordered locus">BS1330_II1013</name>
</gene>
<dbReference type="EMBL" id="AE014292">
    <property type="protein sequence ID" value="AAN34189.1"/>
    <property type="molecule type" value="Genomic_DNA"/>
</dbReference>
<dbReference type="EMBL" id="CP002998">
    <property type="protein sequence ID" value="AEM20465.1"/>
    <property type="molecule type" value="Genomic_DNA"/>
</dbReference>
<dbReference type="RefSeq" id="WP_002965629.1">
    <property type="nucleotide sequence ID" value="NZ_KN046805.1"/>
</dbReference>
<dbReference type="SMR" id="P66243"/>
<dbReference type="GeneID" id="97534928"/>
<dbReference type="KEGG" id="bms:BRA1021"/>
<dbReference type="KEGG" id="bsi:BS1330_II1013"/>
<dbReference type="PATRIC" id="fig|204722.21.peg.1098"/>
<dbReference type="HOGENOM" id="CLU_129938_2_0_5"/>
<dbReference type="Proteomes" id="UP000007104">
    <property type="component" value="Chromosome II"/>
</dbReference>
<dbReference type="GO" id="GO:1990904">
    <property type="term" value="C:ribonucleoprotein complex"/>
    <property type="evidence" value="ECO:0007669"/>
    <property type="project" value="UniProtKB-KW"/>
</dbReference>
<dbReference type="GO" id="GO:0005840">
    <property type="term" value="C:ribosome"/>
    <property type="evidence" value="ECO:0007669"/>
    <property type="project" value="UniProtKB-KW"/>
</dbReference>
<dbReference type="GO" id="GO:0003735">
    <property type="term" value="F:structural constituent of ribosome"/>
    <property type="evidence" value="ECO:0007669"/>
    <property type="project" value="InterPro"/>
</dbReference>
<dbReference type="GO" id="GO:0006412">
    <property type="term" value="P:translation"/>
    <property type="evidence" value="ECO:0007669"/>
    <property type="project" value="UniProtKB-UniRule"/>
</dbReference>
<dbReference type="FunFam" id="1.10.287.3980:FF:000001">
    <property type="entry name" value="Mitochondrial ribosomal protein L34"/>
    <property type="match status" value="1"/>
</dbReference>
<dbReference type="Gene3D" id="1.10.287.3980">
    <property type="match status" value="1"/>
</dbReference>
<dbReference type="HAMAP" id="MF_00391">
    <property type="entry name" value="Ribosomal_bL34"/>
    <property type="match status" value="1"/>
</dbReference>
<dbReference type="InterPro" id="IPR000271">
    <property type="entry name" value="Ribosomal_bL34"/>
</dbReference>
<dbReference type="InterPro" id="IPR020939">
    <property type="entry name" value="Ribosomal_bL34_CS"/>
</dbReference>
<dbReference type="NCBIfam" id="TIGR01030">
    <property type="entry name" value="rpmH_bact"/>
    <property type="match status" value="1"/>
</dbReference>
<dbReference type="PANTHER" id="PTHR14503:SF4">
    <property type="entry name" value="LARGE RIBOSOMAL SUBUNIT PROTEIN BL34M"/>
    <property type="match status" value="1"/>
</dbReference>
<dbReference type="PANTHER" id="PTHR14503">
    <property type="entry name" value="MITOCHONDRIAL RIBOSOMAL PROTEIN 34 FAMILY MEMBER"/>
    <property type="match status" value="1"/>
</dbReference>
<dbReference type="Pfam" id="PF00468">
    <property type="entry name" value="Ribosomal_L34"/>
    <property type="match status" value="1"/>
</dbReference>
<dbReference type="PROSITE" id="PS00784">
    <property type="entry name" value="RIBOSOMAL_L34"/>
    <property type="match status" value="1"/>
</dbReference>
<keyword id="KW-0687">Ribonucleoprotein</keyword>
<keyword id="KW-0689">Ribosomal protein</keyword>
<reference key="1">
    <citation type="journal article" date="2002" name="Proc. Natl. Acad. Sci. U.S.A.">
        <title>The Brucella suis genome reveals fundamental similarities between animal and plant pathogens and symbionts.</title>
        <authorList>
            <person name="Paulsen I.T."/>
            <person name="Seshadri R."/>
            <person name="Nelson K.E."/>
            <person name="Eisen J.A."/>
            <person name="Heidelberg J.F."/>
            <person name="Read T.D."/>
            <person name="Dodson R.J."/>
            <person name="Umayam L.A."/>
            <person name="Brinkac L.M."/>
            <person name="Beanan M.J."/>
            <person name="Daugherty S.C."/>
            <person name="DeBoy R.T."/>
            <person name="Durkin A.S."/>
            <person name="Kolonay J.F."/>
            <person name="Madupu R."/>
            <person name="Nelson W.C."/>
            <person name="Ayodeji B."/>
            <person name="Kraul M."/>
            <person name="Shetty J."/>
            <person name="Malek J.A."/>
            <person name="Van Aken S.E."/>
            <person name="Riedmuller S."/>
            <person name="Tettelin H."/>
            <person name="Gill S.R."/>
            <person name="White O."/>
            <person name="Salzberg S.L."/>
            <person name="Hoover D.L."/>
            <person name="Lindler L.E."/>
            <person name="Halling S.M."/>
            <person name="Boyle S.M."/>
            <person name="Fraser C.M."/>
        </authorList>
    </citation>
    <scope>NUCLEOTIDE SEQUENCE [LARGE SCALE GENOMIC DNA]</scope>
    <source>
        <strain>1330</strain>
    </source>
</reference>
<reference key="2">
    <citation type="journal article" date="2011" name="J. Bacteriol.">
        <title>Revised genome sequence of Brucella suis 1330.</title>
        <authorList>
            <person name="Tae H."/>
            <person name="Shallom S."/>
            <person name="Settlage R."/>
            <person name="Preston D."/>
            <person name="Adams L.G."/>
            <person name="Garner H.R."/>
        </authorList>
    </citation>
    <scope>NUCLEOTIDE SEQUENCE [LARGE SCALE GENOMIC DNA]</scope>
    <source>
        <strain>1330</strain>
    </source>
</reference>
<proteinExistence type="inferred from homology"/>